<comment type="function">
    <text evidence="1">Sulfur carrier protein involved in sulfur trafficking in the cell. Part of a sulfur-relay system required for 2-thiolation during synthesis of 2-thiouridine of the modified wobble base 5-methylaminomethyl-2-thiouridine (mnm(5)s(2)U) in tRNA. Interacts with IscS and stimulates its cysteine desulfurase activity. Accepts an activated sulfur from IscS, which is then transferred to TusD, and thus determines the direction of sulfur flow from IscS to 2-thiouridine formation. Also appears to be involved in sulfur transfer for the biosynthesis of molybdopterin.</text>
</comment>
<comment type="pathway">
    <text evidence="1">tRNA modification.</text>
</comment>
<comment type="subunit">
    <text evidence="1">Interacts with IscS.</text>
</comment>
<comment type="subcellular location">
    <subcellularLocation>
        <location evidence="1">Cytoplasm</location>
    </subcellularLocation>
</comment>
<comment type="similarity">
    <text evidence="1">Belongs to the sulfur carrier protein TusA family.</text>
</comment>
<reference key="1">
    <citation type="submission" date="2008-02" db="EMBL/GenBank/DDBJ databases">
        <title>Complete sequence of Yersinia pseudotuberculosis YPIII.</title>
        <authorList>
            <consortium name="US DOE Joint Genome Institute"/>
            <person name="Copeland A."/>
            <person name="Lucas S."/>
            <person name="Lapidus A."/>
            <person name="Glavina del Rio T."/>
            <person name="Dalin E."/>
            <person name="Tice H."/>
            <person name="Bruce D."/>
            <person name="Goodwin L."/>
            <person name="Pitluck S."/>
            <person name="Munk A.C."/>
            <person name="Brettin T."/>
            <person name="Detter J.C."/>
            <person name="Han C."/>
            <person name="Tapia R."/>
            <person name="Schmutz J."/>
            <person name="Larimer F."/>
            <person name="Land M."/>
            <person name="Hauser L."/>
            <person name="Challacombe J.F."/>
            <person name="Green L."/>
            <person name="Lindler L.E."/>
            <person name="Nikolich M.P."/>
            <person name="Richardson P."/>
        </authorList>
    </citation>
    <scope>NUCLEOTIDE SEQUENCE [LARGE SCALE GENOMIC DNA]</scope>
    <source>
        <strain>YPIII</strain>
    </source>
</reference>
<feature type="chain" id="PRO_1000199939" description="Sulfur carrier protein TusA">
    <location>
        <begin position="1"/>
        <end position="84"/>
    </location>
</feature>
<feature type="active site" description="Cysteine persulfide intermediate" evidence="1">
    <location>
        <position position="19"/>
    </location>
</feature>
<keyword id="KW-0963">Cytoplasm</keyword>
<keyword id="KW-0819">tRNA processing</keyword>
<organism>
    <name type="scientific">Yersinia pseudotuberculosis serotype O:3 (strain YPIII)</name>
    <dbReference type="NCBI Taxonomy" id="502800"/>
    <lineage>
        <taxon>Bacteria</taxon>
        <taxon>Pseudomonadati</taxon>
        <taxon>Pseudomonadota</taxon>
        <taxon>Gammaproteobacteria</taxon>
        <taxon>Enterobacterales</taxon>
        <taxon>Yersiniaceae</taxon>
        <taxon>Yersinia</taxon>
    </lineage>
</organism>
<protein>
    <recommendedName>
        <fullName evidence="1">Sulfur carrier protein TusA</fullName>
    </recommendedName>
    <alternativeName>
        <fullName evidence="1">Sulfur mediator TusA</fullName>
    </alternativeName>
    <alternativeName>
        <fullName evidence="1">Sulfur transfer protein TusA</fullName>
    </alternativeName>
    <alternativeName>
        <fullName evidence="1">tRNA 2-thiouridine synthesizing protein A</fullName>
    </alternativeName>
</protein>
<accession>B1JPB6</accession>
<name>TUSA_YERPY</name>
<gene>
    <name evidence="1" type="primary">tusA</name>
    <name type="ordered locus">YPK_3986</name>
</gene>
<sequence>MTDIFANPDKTLDALGLRCPEPVMMVRKTVRHMEEGQTLLIIADDPATTRDIPGFCRFMDHQLLAQDTEQTPYRYLVRKGITAG</sequence>
<dbReference type="EMBL" id="CP000950">
    <property type="protein sequence ID" value="ACA70249.1"/>
    <property type="molecule type" value="Genomic_DNA"/>
</dbReference>
<dbReference type="RefSeq" id="WP_002215973.1">
    <property type="nucleotide sequence ID" value="NZ_CP009792.1"/>
</dbReference>
<dbReference type="SMR" id="B1JPB6"/>
<dbReference type="GeneID" id="57974887"/>
<dbReference type="KEGG" id="ypy:YPK_3986"/>
<dbReference type="PATRIC" id="fig|502800.11.peg.334"/>
<dbReference type="GO" id="GO:0005737">
    <property type="term" value="C:cytoplasm"/>
    <property type="evidence" value="ECO:0007669"/>
    <property type="project" value="UniProtKB-SubCell"/>
</dbReference>
<dbReference type="GO" id="GO:0097163">
    <property type="term" value="F:sulfur carrier activity"/>
    <property type="evidence" value="ECO:0007669"/>
    <property type="project" value="UniProtKB-UniRule"/>
</dbReference>
<dbReference type="GO" id="GO:0002143">
    <property type="term" value="P:tRNA wobble position uridine thiolation"/>
    <property type="evidence" value="ECO:0007669"/>
    <property type="project" value="InterPro"/>
</dbReference>
<dbReference type="CDD" id="cd03423">
    <property type="entry name" value="SirA"/>
    <property type="match status" value="1"/>
</dbReference>
<dbReference type="Gene3D" id="3.30.110.40">
    <property type="entry name" value="TusA-like domain"/>
    <property type="match status" value="1"/>
</dbReference>
<dbReference type="HAMAP" id="MF_00413">
    <property type="entry name" value="Thiourid_synth_A"/>
    <property type="match status" value="1"/>
</dbReference>
<dbReference type="InterPro" id="IPR022931">
    <property type="entry name" value="Sulphur_carrier_TusA"/>
</dbReference>
<dbReference type="InterPro" id="IPR001455">
    <property type="entry name" value="TusA-like"/>
</dbReference>
<dbReference type="InterPro" id="IPR036868">
    <property type="entry name" value="TusA-like_sf"/>
</dbReference>
<dbReference type="NCBIfam" id="NF001423">
    <property type="entry name" value="PRK00299.1"/>
    <property type="match status" value="1"/>
</dbReference>
<dbReference type="PANTHER" id="PTHR33279:SF2">
    <property type="entry name" value="SULFUR CARRIER PROTEIN TUSA"/>
    <property type="match status" value="1"/>
</dbReference>
<dbReference type="PANTHER" id="PTHR33279">
    <property type="entry name" value="SULFUR CARRIER PROTEIN YEDF-RELATED"/>
    <property type="match status" value="1"/>
</dbReference>
<dbReference type="Pfam" id="PF01206">
    <property type="entry name" value="TusA"/>
    <property type="match status" value="1"/>
</dbReference>
<dbReference type="SUPFAM" id="SSF64307">
    <property type="entry name" value="SirA-like"/>
    <property type="match status" value="1"/>
</dbReference>
<dbReference type="PROSITE" id="PS01148">
    <property type="entry name" value="UPF0033"/>
    <property type="match status" value="1"/>
</dbReference>
<proteinExistence type="inferred from homology"/>
<evidence type="ECO:0000255" key="1">
    <source>
        <dbReference type="HAMAP-Rule" id="MF_00413"/>
    </source>
</evidence>